<evidence type="ECO:0000255" key="1">
    <source>
        <dbReference type="HAMAP-Rule" id="MF_01871"/>
    </source>
</evidence>
<keyword id="KW-1003">Cell membrane</keyword>
<keyword id="KW-0472">Membrane</keyword>
<keyword id="KW-0479">Metal-binding</keyword>
<keyword id="KW-0813">Transport</keyword>
<keyword id="KW-0862">Zinc</keyword>
<proteinExistence type="inferred from homology"/>
<dbReference type="EMBL" id="CP000736">
    <property type="protein sequence ID" value="ABR51346.1"/>
    <property type="molecule type" value="Genomic_DNA"/>
</dbReference>
<dbReference type="KEGG" id="sah:SaurJH1_0488"/>
<dbReference type="HOGENOM" id="CLU_009885_0_0_9"/>
<dbReference type="GO" id="GO:0005886">
    <property type="term" value="C:plasma membrane"/>
    <property type="evidence" value="ECO:0007669"/>
    <property type="project" value="UniProtKB-SubCell"/>
</dbReference>
<dbReference type="GO" id="GO:0008270">
    <property type="term" value="F:zinc ion binding"/>
    <property type="evidence" value="ECO:0007669"/>
    <property type="project" value="UniProtKB-UniRule"/>
</dbReference>
<dbReference type="HAMAP" id="MF_01871">
    <property type="entry name" value="DabA"/>
    <property type="match status" value="1"/>
</dbReference>
<dbReference type="InterPro" id="IPR018752">
    <property type="entry name" value="DabA"/>
</dbReference>
<dbReference type="PANTHER" id="PTHR38344:SF1">
    <property type="entry name" value="INORGANIC CARBON TRANSPORTER SUBUNIT DABA-RELATED"/>
    <property type="match status" value="1"/>
</dbReference>
<dbReference type="PANTHER" id="PTHR38344">
    <property type="entry name" value="UPF0753 PROTEIN AQ_863"/>
    <property type="match status" value="1"/>
</dbReference>
<dbReference type="Pfam" id="PF10070">
    <property type="entry name" value="DabA"/>
    <property type="match status" value="1"/>
</dbReference>
<sequence length="901" mass="102576">MTTQLNINSVIENAKRVITPLSPISIFAARNPWEGLEADTFEDVAKWLRDVRDVDIFPNKALIESAVARGELDESVFNQLVTDMLLEHHYNIPQHYINLYIDNIKTLKDVPASYMNHSNVDVVADLLLEKSKRDMAESYHHYDVRPMSDAIIDEQGEPLSEQVNRQMIKWTKLYIDQFLSSWTMPKREQSFYHAWLHLAQHDHSFTKAQRQVIKGLPNDPEMTIESVLTYFSIDQEDYQAYVEGHLLALPGWAGMLYYRSQQHHFEQHLLTDYLAIRLVVEQLLVGDEFKSVTKDCESRSENWFKQTVASLCYYSDMPSDVLLQHDVNEIQTFIHFAATMNKNVFKNLWLIAWEMTYESQLKQKIKAGHESVAGALDVNQVNVSENDNANQPHSVLLNDTQAVDENNSELNQVGTSTKAQIAFCIDVRSEPFRRHIEAAGPFETIGIAGFFGLPIQKDAVDEQFKHDSLPVMVPPAYRIKEFADRYDMNVYRQQQQTMSSMFYTFKLMKNNVMPSLLLPELSGPFLSLSTIVNSIMPRKSRASLQKIKQKWLKKPETKLTIDREFDRTSDLPVGFTEQEQIDFALQALKLMDLTEAFAPFVVLAGHASHSHNNPHHASLECGACGGASSGFNAKLLAMICNRPNVRQGLKQSGVYIPETTVFAAAEHHTSTDTLAWVYVPDTLSALALDAYESLNDAMPMISEQANRERLDKLPTIGRVNHPVEEAQRFASDWSEVRPEWGLAKNASFIIGRRQLTKGIDLEGRTFLHNYDWRKDKDGKLLNTIISGPALVAQWINLQYYASTVAPHFYGSGNKATQTVTSGVGVMQGNASDLMYGLSWQSVMAADRTMYHSPIRLLVVIQAPDYVVARLFANNEHFARKVSNHWLRLMSVNEEGRFKSWI</sequence>
<gene>
    <name evidence="1" type="primary">dabA</name>
    <name type="ordered locus">SaurJH1_0488</name>
</gene>
<reference key="1">
    <citation type="submission" date="2007-06" db="EMBL/GenBank/DDBJ databases">
        <title>Complete sequence of chromosome of Staphylococcus aureus subsp. aureus JH1.</title>
        <authorList>
            <consortium name="US DOE Joint Genome Institute"/>
            <person name="Copeland A."/>
            <person name="Lucas S."/>
            <person name="Lapidus A."/>
            <person name="Barry K."/>
            <person name="Detter J.C."/>
            <person name="Glavina del Rio T."/>
            <person name="Hammon N."/>
            <person name="Israni S."/>
            <person name="Dalin E."/>
            <person name="Tice H."/>
            <person name="Pitluck S."/>
            <person name="Chain P."/>
            <person name="Malfatti S."/>
            <person name="Shin M."/>
            <person name="Vergez L."/>
            <person name="Schmutz J."/>
            <person name="Larimer F."/>
            <person name="Land M."/>
            <person name="Hauser L."/>
            <person name="Kyrpides N."/>
            <person name="Ivanova N."/>
            <person name="Tomasz A."/>
            <person name="Richardson P."/>
        </authorList>
    </citation>
    <scope>NUCLEOTIDE SEQUENCE [LARGE SCALE GENOMIC DNA]</scope>
    <source>
        <strain>JH1</strain>
    </source>
</reference>
<comment type="function">
    <text evidence="1">Part of an energy-coupled inorganic carbon pump.</text>
</comment>
<comment type="cofactor">
    <cofactor evidence="1">
        <name>Zn(2+)</name>
        <dbReference type="ChEBI" id="CHEBI:29105"/>
    </cofactor>
</comment>
<comment type="subunit">
    <text evidence="1">Forms a complex with DabB.</text>
</comment>
<comment type="subcellular location">
    <subcellularLocation>
        <location evidence="1">Cell membrane</location>
        <topology evidence="1">Peripheral membrane protein</topology>
    </subcellularLocation>
</comment>
<comment type="similarity">
    <text evidence="1">Belongs to the inorganic carbon transporter (TC 9.A.2) DabA family.</text>
</comment>
<accession>A6TYS8</accession>
<organism>
    <name type="scientific">Staphylococcus aureus (strain JH1)</name>
    <dbReference type="NCBI Taxonomy" id="359787"/>
    <lineage>
        <taxon>Bacteria</taxon>
        <taxon>Bacillati</taxon>
        <taxon>Bacillota</taxon>
        <taxon>Bacilli</taxon>
        <taxon>Bacillales</taxon>
        <taxon>Staphylococcaceae</taxon>
        <taxon>Staphylococcus</taxon>
    </lineage>
</organism>
<protein>
    <recommendedName>
        <fullName evidence="1">Probable inorganic carbon transporter subunit DabA</fullName>
    </recommendedName>
</protein>
<feature type="chain" id="PRO_0000387304" description="Probable inorganic carbon transporter subunit DabA">
    <location>
        <begin position="1"/>
        <end position="901"/>
    </location>
</feature>
<feature type="binding site" evidence="1">
    <location>
        <position position="424"/>
    </location>
    <ligand>
        <name>Zn(2+)</name>
        <dbReference type="ChEBI" id="CHEBI:29105"/>
    </ligand>
</feature>
<feature type="binding site" evidence="1">
    <location>
        <position position="426"/>
    </location>
    <ligand>
        <name>Zn(2+)</name>
        <dbReference type="ChEBI" id="CHEBI:29105"/>
    </ligand>
</feature>
<feature type="binding site" evidence="1">
    <location>
        <position position="606"/>
    </location>
    <ligand>
        <name>Zn(2+)</name>
        <dbReference type="ChEBI" id="CHEBI:29105"/>
    </ligand>
</feature>
<feature type="binding site" evidence="1">
    <location>
        <position position="621"/>
    </location>
    <ligand>
        <name>Zn(2+)</name>
        <dbReference type="ChEBI" id="CHEBI:29105"/>
    </ligand>
</feature>
<name>DABA_STAA2</name>